<evidence type="ECO:0000255" key="1">
    <source>
        <dbReference type="HAMAP-Rule" id="MF_01369"/>
    </source>
</evidence>
<evidence type="ECO:0000305" key="2"/>
<name>RL23_SALPA</name>
<accession>Q5PIV4</accession>
<dbReference type="EMBL" id="CP000026">
    <property type="protein sequence ID" value="AAV79120.1"/>
    <property type="molecule type" value="Genomic_DNA"/>
</dbReference>
<dbReference type="RefSeq" id="WP_000617546.1">
    <property type="nucleotide sequence ID" value="NC_006511.1"/>
</dbReference>
<dbReference type="SMR" id="Q5PIV4"/>
<dbReference type="GeneID" id="98390440"/>
<dbReference type="KEGG" id="spt:SPA3304"/>
<dbReference type="HOGENOM" id="CLU_037562_3_1_6"/>
<dbReference type="Proteomes" id="UP000008185">
    <property type="component" value="Chromosome"/>
</dbReference>
<dbReference type="GO" id="GO:1990904">
    <property type="term" value="C:ribonucleoprotein complex"/>
    <property type="evidence" value="ECO:0007669"/>
    <property type="project" value="UniProtKB-KW"/>
</dbReference>
<dbReference type="GO" id="GO:0005840">
    <property type="term" value="C:ribosome"/>
    <property type="evidence" value="ECO:0007669"/>
    <property type="project" value="UniProtKB-KW"/>
</dbReference>
<dbReference type="GO" id="GO:0019843">
    <property type="term" value="F:rRNA binding"/>
    <property type="evidence" value="ECO:0007669"/>
    <property type="project" value="UniProtKB-UniRule"/>
</dbReference>
<dbReference type="GO" id="GO:0003735">
    <property type="term" value="F:structural constituent of ribosome"/>
    <property type="evidence" value="ECO:0007669"/>
    <property type="project" value="InterPro"/>
</dbReference>
<dbReference type="GO" id="GO:0006412">
    <property type="term" value="P:translation"/>
    <property type="evidence" value="ECO:0007669"/>
    <property type="project" value="UniProtKB-UniRule"/>
</dbReference>
<dbReference type="FunFam" id="3.30.70.330:FF:000001">
    <property type="entry name" value="50S ribosomal protein L23"/>
    <property type="match status" value="1"/>
</dbReference>
<dbReference type="Gene3D" id="3.30.70.330">
    <property type="match status" value="1"/>
</dbReference>
<dbReference type="HAMAP" id="MF_01369_B">
    <property type="entry name" value="Ribosomal_uL23_B"/>
    <property type="match status" value="1"/>
</dbReference>
<dbReference type="InterPro" id="IPR012677">
    <property type="entry name" value="Nucleotide-bd_a/b_plait_sf"/>
</dbReference>
<dbReference type="InterPro" id="IPR013025">
    <property type="entry name" value="Ribosomal_uL23-like"/>
</dbReference>
<dbReference type="InterPro" id="IPR012678">
    <property type="entry name" value="Ribosomal_uL23/eL15/eS24_sf"/>
</dbReference>
<dbReference type="InterPro" id="IPR001014">
    <property type="entry name" value="Ribosomal_uL23_CS"/>
</dbReference>
<dbReference type="NCBIfam" id="NF004358">
    <property type="entry name" value="PRK05738.1-1"/>
    <property type="match status" value="1"/>
</dbReference>
<dbReference type="NCBIfam" id="NF004359">
    <property type="entry name" value="PRK05738.1-3"/>
    <property type="match status" value="1"/>
</dbReference>
<dbReference type="NCBIfam" id="NF004363">
    <property type="entry name" value="PRK05738.2-4"/>
    <property type="match status" value="1"/>
</dbReference>
<dbReference type="PANTHER" id="PTHR11620">
    <property type="entry name" value="60S RIBOSOMAL PROTEIN L23A"/>
    <property type="match status" value="1"/>
</dbReference>
<dbReference type="Pfam" id="PF00276">
    <property type="entry name" value="Ribosomal_L23"/>
    <property type="match status" value="1"/>
</dbReference>
<dbReference type="SUPFAM" id="SSF54189">
    <property type="entry name" value="Ribosomal proteins S24e, L23 and L15e"/>
    <property type="match status" value="1"/>
</dbReference>
<dbReference type="PROSITE" id="PS00050">
    <property type="entry name" value="RIBOSOMAL_L23"/>
    <property type="match status" value="1"/>
</dbReference>
<protein>
    <recommendedName>
        <fullName evidence="1">Large ribosomal subunit protein uL23</fullName>
    </recommendedName>
    <alternativeName>
        <fullName evidence="2">50S ribosomal protein L23</fullName>
    </alternativeName>
</protein>
<organism>
    <name type="scientific">Salmonella paratyphi A (strain ATCC 9150 / SARB42)</name>
    <dbReference type="NCBI Taxonomy" id="295319"/>
    <lineage>
        <taxon>Bacteria</taxon>
        <taxon>Pseudomonadati</taxon>
        <taxon>Pseudomonadota</taxon>
        <taxon>Gammaproteobacteria</taxon>
        <taxon>Enterobacterales</taxon>
        <taxon>Enterobacteriaceae</taxon>
        <taxon>Salmonella</taxon>
    </lineage>
</organism>
<feature type="chain" id="PRO_0000272836" description="Large ribosomal subunit protein uL23">
    <location>
        <begin position="1"/>
        <end position="100"/>
    </location>
</feature>
<proteinExistence type="inferred from homology"/>
<gene>
    <name evidence="1" type="primary">rplW</name>
    <name type="ordered locus">SPA3304</name>
</gene>
<sequence>MIREERLLKVLRAPHVSEKASTAMEKTNTIVLKVAKDATKAEIKAAVQKLFEVEVEVVNTLVVKGKVKRHGQRIGRRSDWKKAYVTLKEGQNLDFVGGAE</sequence>
<comment type="function">
    <text evidence="1">One of the early assembly proteins it binds 23S rRNA. One of the proteins that surrounds the polypeptide exit tunnel on the outside of the ribosome. Forms the main docking site for trigger factor binding to the ribosome.</text>
</comment>
<comment type="subunit">
    <text evidence="1">Part of the 50S ribosomal subunit. Contacts protein L29, and trigger factor when it is bound to the ribosome.</text>
</comment>
<comment type="similarity">
    <text evidence="1">Belongs to the universal ribosomal protein uL23 family.</text>
</comment>
<keyword id="KW-0687">Ribonucleoprotein</keyword>
<keyword id="KW-0689">Ribosomal protein</keyword>
<keyword id="KW-0694">RNA-binding</keyword>
<keyword id="KW-0699">rRNA-binding</keyword>
<reference key="1">
    <citation type="journal article" date="2004" name="Nat. Genet.">
        <title>Comparison of genome degradation in Paratyphi A and Typhi, human-restricted serovars of Salmonella enterica that cause typhoid.</title>
        <authorList>
            <person name="McClelland M."/>
            <person name="Sanderson K.E."/>
            <person name="Clifton S.W."/>
            <person name="Latreille P."/>
            <person name="Porwollik S."/>
            <person name="Sabo A."/>
            <person name="Meyer R."/>
            <person name="Bieri T."/>
            <person name="Ozersky P."/>
            <person name="McLellan M."/>
            <person name="Harkins C.R."/>
            <person name="Wang C."/>
            <person name="Nguyen C."/>
            <person name="Berghoff A."/>
            <person name="Elliott G."/>
            <person name="Kohlberg S."/>
            <person name="Strong C."/>
            <person name="Du F."/>
            <person name="Carter J."/>
            <person name="Kremizki C."/>
            <person name="Layman D."/>
            <person name="Leonard S."/>
            <person name="Sun H."/>
            <person name="Fulton L."/>
            <person name="Nash W."/>
            <person name="Miner T."/>
            <person name="Minx P."/>
            <person name="Delehaunty K."/>
            <person name="Fronick C."/>
            <person name="Magrini V."/>
            <person name="Nhan M."/>
            <person name="Warren W."/>
            <person name="Florea L."/>
            <person name="Spieth J."/>
            <person name="Wilson R.K."/>
        </authorList>
    </citation>
    <scope>NUCLEOTIDE SEQUENCE [LARGE SCALE GENOMIC DNA]</scope>
    <source>
        <strain>ATCC 9150 / SARB42</strain>
    </source>
</reference>